<keyword id="KW-0025">Alternative splicing</keyword>
<keyword id="KW-0175">Coiled coil</keyword>
<keyword id="KW-0238">DNA-binding</keyword>
<keyword id="KW-0479">Metal-binding</keyword>
<keyword id="KW-0507">mRNA processing</keyword>
<keyword id="KW-0508">mRNA splicing</keyword>
<keyword id="KW-0539">Nucleus</keyword>
<keyword id="KW-1185">Reference proteome</keyword>
<keyword id="KW-0694">RNA-binding</keyword>
<keyword id="KW-0943">RNA-mediated gene silencing</keyword>
<keyword id="KW-0747">Spliceosome</keyword>
<keyword id="KW-0862">Zinc</keyword>
<keyword id="KW-0863">Zinc-finger</keyword>
<reference key="1">
    <citation type="journal article" date="2000" name="Nature">
        <title>Sequence and analysis of chromosome 1 of the plant Arabidopsis thaliana.</title>
        <authorList>
            <person name="Theologis A."/>
            <person name="Ecker J.R."/>
            <person name="Palm C.J."/>
            <person name="Federspiel N.A."/>
            <person name="Kaul S."/>
            <person name="White O."/>
            <person name="Alonso J."/>
            <person name="Altafi H."/>
            <person name="Araujo R."/>
            <person name="Bowman C.L."/>
            <person name="Brooks S.Y."/>
            <person name="Buehler E."/>
            <person name="Chan A."/>
            <person name="Chao Q."/>
            <person name="Chen H."/>
            <person name="Cheuk R.F."/>
            <person name="Chin C.W."/>
            <person name="Chung M.K."/>
            <person name="Conn L."/>
            <person name="Conway A.B."/>
            <person name="Conway A.R."/>
            <person name="Creasy T.H."/>
            <person name="Dewar K."/>
            <person name="Dunn P."/>
            <person name="Etgu P."/>
            <person name="Feldblyum T.V."/>
            <person name="Feng J.-D."/>
            <person name="Fong B."/>
            <person name="Fujii C.Y."/>
            <person name="Gill J.E."/>
            <person name="Goldsmith A.D."/>
            <person name="Haas B."/>
            <person name="Hansen N.F."/>
            <person name="Hughes B."/>
            <person name="Huizar L."/>
            <person name="Hunter J.L."/>
            <person name="Jenkins J."/>
            <person name="Johnson-Hopson C."/>
            <person name="Khan S."/>
            <person name="Khaykin E."/>
            <person name="Kim C.J."/>
            <person name="Koo H.L."/>
            <person name="Kremenetskaia I."/>
            <person name="Kurtz D.B."/>
            <person name="Kwan A."/>
            <person name="Lam B."/>
            <person name="Langin-Hooper S."/>
            <person name="Lee A."/>
            <person name="Lee J.M."/>
            <person name="Lenz C.A."/>
            <person name="Li J.H."/>
            <person name="Li Y.-P."/>
            <person name="Lin X."/>
            <person name="Liu S.X."/>
            <person name="Liu Z.A."/>
            <person name="Luros J.S."/>
            <person name="Maiti R."/>
            <person name="Marziali A."/>
            <person name="Militscher J."/>
            <person name="Miranda M."/>
            <person name="Nguyen M."/>
            <person name="Nierman W.C."/>
            <person name="Osborne B.I."/>
            <person name="Pai G."/>
            <person name="Peterson J."/>
            <person name="Pham P.K."/>
            <person name="Rizzo M."/>
            <person name="Rooney T."/>
            <person name="Rowley D."/>
            <person name="Sakano H."/>
            <person name="Salzberg S.L."/>
            <person name="Schwartz J.R."/>
            <person name="Shinn P."/>
            <person name="Southwick A.M."/>
            <person name="Sun H."/>
            <person name="Tallon L.J."/>
            <person name="Tambunga G."/>
            <person name="Toriumi M.J."/>
            <person name="Town C.D."/>
            <person name="Utterback T."/>
            <person name="Van Aken S."/>
            <person name="Vaysberg M."/>
            <person name="Vysotskaia V.S."/>
            <person name="Walker M."/>
            <person name="Wu D."/>
            <person name="Yu G."/>
            <person name="Fraser C.M."/>
            <person name="Venter J.C."/>
            <person name="Davis R.W."/>
        </authorList>
    </citation>
    <scope>NUCLEOTIDE SEQUENCE [LARGE SCALE GENOMIC DNA]</scope>
    <source>
        <strain>cv. Columbia</strain>
    </source>
</reference>
<reference key="2">
    <citation type="journal article" date="2017" name="Plant J.">
        <title>Araport11: a complete reannotation of the Arabidopsis thaliana reference genome.</title>
        <authorList>
            <person name="Cheng C.Y."/>
            <person name="Krishnakumar V."/>
            <person name="Chan A.P."/>
            <person name="Thibaud-Nissen F."/>
            <person name="Schobel S."/>
            <person name="Town C.D."/>
        </authorList>
    </citation>
    <scope>GENOME REANNOTATION</scope>
    <source>
        <strain>cv. Columbia</strain>
    </source>
</reference>
<reference key="3">
    <citation type="journal article" date="2003" name="Science">
        <title>Empirical analysis of transcriptional activity in the Arabidopsis genome.</title>
        <authorList>
            <person name="Yamada K."/>
            <person name="Lim J."/>
            <person name="Dale J.M."/>
            <person name="Chen H."/>
            <person name="Shinn P."/>
            <person name="Palm C.J."/>
            <person name="Southwick A.M."/>
            <person name="Wu H.C."/>
            <person name="Kim C.J."/>
            <person name="Nguyen M."/>
            <person name="Pham P.K."/>
            <person name="Cheuk R.F."/>
            <person name="Karlin-Newmann G."/>
            <person name="Liu S.X."/>
            <person name="Lam B."/>
            <person name="Sakano H."/>
            <person name="Wu T."/>
            <person name="Yu G."/>
            <person name="Miranda M."/>
            <person name="Quach H.L."/>
            <person name="Tripp M."/>
            <person name="Chang C.H."/>
            <person name="Lee J.M."/>
            <person name="Toriumi M.J."/>
            <person name="Chan M.M."/>
            <person name="Tang C.C."/>
            <person name="Onodera C.S."/>
            <person name="Deng J.M."/>
            <person name="Akiyama K."/>
            <person name="Ansari Y."/>
            <person name="Arakawa T."/>
            <person name="Banh J."/>
            <person name="Banno F."/>
            <person name="Bowser L."/>
            <person name="Brooks S.Y."/>
            <person name="Carninci P."/>
            <person name="Chao Q."/>
            <person name="Choy N."/>
            <person name="Enju A."/>
            <person name="Goldsmith A.D."/>
            <person name="Gurjal M."/>
            <person name="Hansen N.F."/>
            <person name="Hayashizaki Y."/>
            <person name="Johnson-Hopson C."/>
            <person name="Hsuan V.W."/>
            <person name="Iida K."/>
            <person name="Karnes M."/>
            <person name="Khan S."/>
            <person name="Koesema E."/>
            <person name="Ishida J."/>
            <person name="Jiang P.X."/>
            <person name="Jones T."/>
            <person name="Kawai J."/>
            <person name="Kamiya A."/>
            <person name="Meyers C."/>
            <person name="Nakajima M."/>
            <person name="Narusaka M."/>
            <person name="Seki M."/>
            <person name="Sakurai T."/>
            <person name="Satou M."/>
            <person name="Tamse R."/>
            <person name="Vaysberg M."/>
            <person name="Wallender E.K."/>
            <person name="Wong C."/>
            <person name="Yamamura Y."/>
            <person name="Yuan S."/>
            <person name="Shinozaki K."/>
            <person name="Davis R.W."/>
            <person name="Theologis A."/>
            <person name="Ecker J.R."/>
        </authorList>
    </citation>
    <scope>NUCLEOTIDE SEQUENCE [LARGE SCALE MRNA]</scope>
    <source>
        <strain>cv. Columbia</strain>
    </source>
</reference>
<reference key="4">
    <citation type="journal article" date="2013" name="EMBO J.">
        <title>The splicing machinery promotes RNA-directed DNA methylation and transcriptional silencing in Arabidopsis.</title>
        <authorList>
            <person name="Zhang C.J."/>
            <person name="Zhou J.X."/>
            <person name="Liu J."/>
            <person name="Ma Z.Y."/>
            <person name="Zhang S.W."/>
            <person name="Dou K."/>
            <person name="Huang H.W."/>
            <person name="Cai T."/>
            <person name="Liu R."/>
            <person name="Zhu J.K."/>
            <person name="He X.J."/>
        </authorList>
    </citation>
    <scope>FUNCTION</scope>
    <scope>INTERACTION WITH STA1</scope>
    <scope>SUBCELLULAR LOCATION</scope>
    <scope>IDENTIFICATION IN PRE-MRNA SPLICING COMPLEX</scope>
</reference>
<reference key="5">
    <citation type="journal article" date="2015" name="Mol. Plant">
        <title>The splicing factor PRP31 is involved in transcriptional gene silencing and stress response in Arabidopsis.</title>
        <authorList>
            <person name="Du J.L."/>
            <person name="Zhang S.W."/>
            <person name="Huang H.W."/>
            <person name="Cai T."/>
            <person name="Li L."/>
            <person name="Chen S."/>
            <person name="He X.J."/>
        </authorList>
    </citation>
    <scope>INTERACTION WITH PRP31</scope>
    <scope>SUBCELLULAR LOCATION</scope>
</reference>
<proteinExistence type="evidence at protein level"/>
<accession>Q7XA66</accession>
<accession>Q94AV7</accession>
<accession>Q9FX87</accession>
<sequence>MTEYWVSQGNKWCEFCKIWIQNNPTSIRNHDLGKRHRECVDKKLTDMRERSAAKDKELKKNEKLLQQIEAKATRSYQKDIATAQQVAKANGAPEDGTSDWMLDSASGYYYNQTNGLHYDSQSGFYYSDSIGHWVTQDEAYAAVKTSSGTKVPLVKKPVSSSGAGPSVGKPPGRLVTASLNPKRAVKGAASSVDLGNNKRKRQDEKPKKVSAEEKAALKAREAARKRVEDREKPLLGLYNRPF</sequence>
<comment type="function">
    <text evidence="4">Nucleic acid-binding protein that promotes Pol IV-dependent small interfering RNA (siRNA) accumulation, DNA methylation and transcriptional silencing. May possess both RNA-directed DNA methylation (RdDM)-dependent and -independent roles in transcriptional silencing. Acts as a pre-mRNA splicing factor that associates with several typical components of the splicing machinery as well as with Pol II.</text>
</comment>
<comment type="subunit">
    <text evidence="4 5">Component of a pre-mRNA splicing complex. Interacts with STA1. Interacts with PRP31 (PubMed:25684655).</text>
</comment>
<comment type="interaction">
    <interactant intactId="EBI-4429233">
        <id>Q7XA66</id>
    </interactant>
    <interactant intactId="EBI-6921761">
        <id>Q9ZT71</id>
        <label>STA1</label>
    </interactant>
    <organismsDiffer>false</organismsDiffer>
    <experiments>2</experiments>
</comment>
<comment type="subcellular location">
    <subcellularLocation>
        <location evidence="2 4 5">Nucleus</location>
    </subcellularLocation>
    <subcellularLocation>
        <location evidence="4 5">Nucleus</location>
        <location evidence="4 5">Cajal body</location>
    </subcellularLocation>
</comment>
<comment type="alternative products">
    <event type="alternative splicing"/>
    <isoform>
        <id>Q7XA66-1</id>
        <name>1</name>
        <sequence type="displayed"/>
    </isoform>
    <text evidence="7">A number of isoforms are produced. According to EST sequences.</text>
</comment>
<comment type="sequence caution" evidence="7">
    <conflict type="erroneous gene model prediction">
        <sequence resource="EMBL-CDS" id="AAG13045"/>
    </conflict>
</comment>
<protein>
    <recommendedName>
        <fullName evidence="7">Zinc finger protein ZOP1</fullName>
    </recommendedName>
    <alternativeName>
        <fullName evidence="6">Zinc-finger and OCRE domain-containing protein 1</fullName>
    </alternativeName>
</protein>
<evidence type="ECO:0000255" key="1"/>
<evidence type="ECO:0000255" key="2">
    <source>
        <dbReference type="PROSITE-ProRule" id="PRU00130"/>
    </source>
</evidence>
<evidence type="ECO:0000256" key="3">
    <source>
        <dbReference type="SAM" id="MobiDB-lite"/>
    </source>
</evidence>
<evidence type="ECO:0000269" key="4">
    <source>
    </source>
</evidence>
<evidence type="ECO:0000269" key="5">
    <source>
    </source>
</evidence>
<evidence type="ECO:0000303" key="6">
    <source>
    </source>
</evidence>
<evidence type="ECO:0000305" key="7"/>
<evidence type="ECO:0000312" key="8">
    <source>
        <dbReference type="Araport" id="AT1G49590"/>
    </source>
</evidence>
<evidence type="ECO:0000312" key="9">
    <source>
        <dbReference type="EMBL" id="AAG13045.1"/>
    </source>
</evidence>
<organism>
    <name type="scientific">Arabidopsis thaliana</name>
    <name type="common">Mouse-ear cress</name>
    <dbReference type="NCBI Taxonomy" id="3702"/>
    <lineage>
        <taxon>Eukaryota</taxon>
        <taxon>Viridiplantae</taxon>
        <taxon>Streptophyta</taxon>
        <taxon>Embryophyta</taxon>
        <taxon>Tracheophyta</taxon>
        <taxon>Spermatophyta</taxon>
        <taxon>Magnoliopsida</taxon>
        <taxon>eudicotyledons</taxon>
        <taxon>Gunneridae</taxon>
        <taxon>Pentapetalae</taxon>
        <taxon>rosids</taxon>
        <taxon>malvids</taxon>
        <taxon>Brassicales</taxon>
        <taxon>Brassicaceae</taxon>
        <taxon>Camelineae</taxon>
        <taxon>Arabidopsis</taxon>
    </lineage>
</organism>
<feature type="chain" id="PRO_0000436557" description="Zinc finger protein ZOP1">
    <location>
        <begin position="1"/>
        <end position="242"/>
    </location>
</feature>
<feature type="zinc finger region" description="Matrin-type" evidence="2">
    <location>
        <begin position="11"/>
        <end position="42"/>
    </location>
</feature>
<feature type="region of interest" description="Disordered" evidence="3">
    <location>
        <begin position="154"/>
        <end position="242"/>
    </location>
</feature>
<feature type="coiled-coil region" evidence="1">
    <location>
        <begin position="42"/>
        <end position="71"/>
    </location>
</feature>
<feature type="compositionally biased region" description="Low complexity" evidence="3">
    <location>
        <begin position="155"/>
        <end position="172"/>
    </location>
</feature>
<feature type="compositionally biased region" description="Basic and acidic residues" evidence="3">
    <location>
        <begin position="201"/>
        <end position="233"/>
    </location>
</feature>
<gene>
    <name evidence="6" type="primary">ZOP1</name>
    <name evidence="8" type="ordered locus">At1g49590</name>
    <name evidence="9" type="ORF">F14J22.17</name>
</gene>
<dbReference type="EMBL" id="AC011807">
    <property type="protein sequence ID" value="AAG13045.1"/>
    <property type="status" value="ALT_SEQ"/>
    <property type="molecule type" value="Genomic_DNA"/>
</dbReference>
<dbReference type="EMBL" id="CP002684">
    <property type="protein sequence ID" value="AEE32445.1"/>
    <property type="molecule type" value="Genomic_DNA"/>
</dbReference>
<dbReference type="EMBL" id="AY045687">
    <property type="protein sequence ID" value="AAK74045.1"/>
    <property type="molecule type" value="mRNA"/>
</dbReference>
<dbReference type="EMBL" id="BT010196">
    <property type="protein sequence ID" value="AAQ22665.1"/>
    <property type="molecule type" value="mRNA"/>
</dbReference>
<dbReference type="PIR" id="E96532">
    <property type="entry name" value="E96532"/>
</dbReference>
<dbReference type="RefSeq" id="NP_175382.1">
    <molecule id="Q7XA66-1"/>
    <property type="nucleotide sequence ID" value="NM_103847.5"/>
</dbReference>
<dbReference type="SMR" id="Q7XA66"/>
<dbReference type="FunCoup" id="Q7XA66">
    <property type="interactions" value="2038"/>
</dbReference>
<dbReference type="IntAct" id="Q7XA66">
    <property type="interactions" value="28"/>
</dbReference>
<dbReference type="MINT" id="Q7XA66"/>
<dbReference type="STRING" id="3702.Q7XA66"/>
<dbReference type="PaxDb" id="3702-AT1G49590.1"/>
<dbReference type="ProteomicsDB" id="242978">
    <molecule id="Q7XA66-1"/>
</dbReference>
<dbReference type="EnsemblPlants" id="AT1G49590.1">
    <molecule id="Q7XA66-1"/>
    <property type="protein sequence ID" value="AT1G49590.1"/>
    <property type="gene ID" value="AT1G49590"/>
</dbReference>
<dbReference type="GeneID" id="841383"/>
<dbReference type="Gramene" id="AT1G49590.1">
    <molecule id="Q7XA66-1"/>
    <property type="protein sequence ID" value="AT1G49590.1"/>
    <property type="gene ID" value="AT1G49590"/>
</dbReference>
<dbReference type="KEGG" id="ath:AT1G49590"/>
<dbReference type="Araport" id="AT1G49590"/>
<dbReference type="TAIR" id="AT1G49590">
    <property type="gene designation" value="ZOP1"/>
</dbReference>
<dbReference type="eggNOG" id="KOG0150">
    <property type="taxonomic scope" value="Eukaryota"/>
</dbReference>
<dbReference type="HOGENOM" id="CLU_072188_0_0_1"/>
<dbReference type="InParanoid" id="Q7XA66"/>
<dbReference type="OMA" id="WCDYCKI"/>
<dbReference type="OrthoDB" id="191651at2759"/>
<dbReference type="PhylomeDB" id="Q7XA66"/>
<dbReference type="PRO" id="PR:Q7XA66"/>
<dbReference type="Proteomes" id="UP000006548">
    <property type="component" value="Chromosome 1"/>
</dbReference>
<dbReference type="ExpressionAtlas" id="Q7XA66">
    <property type="expression patterns" value="baseline and differential"/>
</dbReference>
<dbReference type="GO" id="GO:0015030">
    <property type="term" value="C:Cajal body"/>
    <property type="evidence" value="ECO:0000314"/>
    <property type="project" value="TAIR"/>
</dbReference>
<dbReference type="GO" id="GO:0005681">
    <property type="term" value="C:spliceosomal complex"/>
    <property type="evidence" value="ECO:0007669"/>
    <property type="project" value="UniProtKB-KW"/>
</dbReference>
<dbReference type="GO" id="GO:0003690">
    <property type="term" value="F:double-stranded DNA binding"/>
    <property type="evidence" value="ECO:0000314"/>
    <property type="project" value="TAIR"/>
</dbReference>
<dbReference type="GO" id="GO:0003725">
    <property type="term" value="F:double-stranded RNA binding"/>
    <property type="evidence" value="ECO:0000314"/>
    <property type="project" value="TAIR"/>
</dbReference>
<dbReference type="GO" id="GO:0008270">
    <property type="term" value="F:zinc ion binding"/>
    <property type="evidence" value="ECO:0007669"/>
    <property type="project" value="UniProtKB-KW"/>
</dbReference>
<dbReference type="GO" id="GO:0080188">
    <property type="term" value="P:gene silencing by siRNA-directed DNA methylation"/>
    <property type="evidence" value="ECO:0000315"/>
    <property type="project" value="TAIR"/>
</dbReference>
<dbReference type="GO" id="GO:0000398">
    <property type="term" value="P:mRNA splicing, via spliceosome"/>
    <property type="evidence" value="ECO:0007669"/>
    <property type="project" value="InterPro"/>
</dbReference>
<dbReference type="GO" id="GO:0008380">
    <property type="term" value="P:RNA splicing"/>
    <property type="evidence" value="ECO:0000315"/>
    <property type="project" value="TAIR"/>
</dbReference>
<dbReference type="GO" id="GO:0009845">
    <property type="term" value="P:seed germination"/>
    <property type="evidence" value="ECO:0000315"/>
    <property type="project" value="TAIR"/>
</dbReference>
<dbReference type="CDD" id="cd16165">
    <property type="entry name" value="OCRE_ZOP1_plant"/>
    <property type="match status" value="1"/>
</dbReference>
<dbReference type="InterPro" id="IPR000690">
    <property type="entry name" value="Matrin/U1-C_Znf_C2H2"/>
</dbReference>
<dbReference type="InterPro" id="IPR003604">
    <property type="entry name" value="Matrin/U1-like-C_Znf_C2H2"/>
</dbReference>
<dbReference type="InterPro" id="IPR041591">
    <property type="entry name" value="OCRE"/>
</dbReference>
<dbReference type="InterPro" id="IPR013085">
    <property type="entry name" value="U1-CZ_Znf_C2H2"/>
</dbReference>
<dbReference type="InterPro" id="IPR040023">
    <property type="entry name" value="WBP4"/>
</dbReference>
<dbReference type="InterPro" id="IPR035622">
    <property type="entry name" value="ZOP1_OCRE"/>
</dbReference>
<dbReference type="PANTHER" id="PTHR13173">
    <property type="entry name" value="WW DOMAIN BINDING PROTEIN 4"/>
    <property type="match status" value="1"/>
</dbReference>
<dbReference type="PANTHER" id="PTHR13173:SF10">
    <property type="entry name" value="WW DOMAIN-BINDING PROTEIN 4"/>
    <property type="match status" value="1"/>
</dbReference>
<dbReference type="Pfam" id="PF17780">
    <property type="entry name" value="OCRE"/>
    <property type="match status" value="1"/>
</dbReference>
<dbReference type="Pfam" id="PF06220">
    <property type="entry name" value="zf-U1"/>
    <property type="match status" value="1"/>
</dbReference>
<dbReference type="SMART" id="SM00451">
    <property type="entry name" value="ZnF_U1"/>
    <property type="match status" value="1"/>
</dbReference>
<dbReference type="PROSITE" id="PS50171">
    <property type="entry name" value="ZF_MATRIN"/>
    <property type="match status" value="1"/>
</dbReference>
<name>ZOP1_ARATH</name>